<keyword id="KW-0028">Amino-acid biosynthesis</keyword>
<keyword id="KW-0963">Cytoplasm</keyword>
<keyword id="KW-0368">Histidine biosynthesis</keyword>
<keyword id="KW-0456">Lyase</keyword>
<keyword id="KW-1185">Reference proteome</keyword>
<dbReference type="EC" id="4.2.1.19" evidence="1"/>
<dbReference type="EMBL" id="AM114193">
    <property type="protein sequence ID" value="CAJ38101.1"/>
    <property type="molecule type" value="Genomic_DNA"/>
</dbReference>
<dbReference type="RefSeq" id="WP_012034490.1">
    <property type="nucleotide sequence ID" value="NC_009464.1"/>
</dbReference>
<dbReference type="SMR" id="Q0W0J2"/>
<dbReference type="STRING" id="351160.RRC390"/>
<dbReference type="GeneID" id="5143708"/>
<dbReference type="KEGG" id="rci:RRC390"/>
<dbReference type="PATRIC" id="fig|351160.9.peg.172"/>
<dbReference type="eggNOG" id="arCOG04398">
    <property type="taxonomic scope" value="Archaea"/>
</dbReference>
<dbReference type="OrthoDB" id="103579at2157"/>
<dbReference type="UniPathway" id="UPA00031">
    <property type="reaction ID" value="UER00011"/>
</dbReference>
<dbReference type="Proteomes" id="UP000000663">
    <property type="component" value="Chromosome"/>
</dbReference>
<dbReference type="GO" id="GO:0005737">
    <property type="term" value="C:cytoplasm"/>
    <property type="evidence" value="ECO:0007669"/>
    <property type="project" value="UniProtKB-SubCell"/>
</dbReference>
<dbReference type="GO" id="GO:0004424">
    <property type="term" value="F:imidazoleglycerol-phosphate dehydratase activity"/>
    <property type="evidence" value="ECO:0007669"/>
    <property type="project" value="UniProtKB-UniRule"/>
</dbReference>
<dbReference type="GO" id="GO:0000105">
    <property type="term" value="P:L-histidine biosynthetic process"/>
    <property type="evidence" value="ECO:0007669"/>
    <property type="project" value="UniProtKB-UniRule"/>
</dbReference>
<dbReference type="CDD" id="cd07914">
    <property type="entry name" value="IGPD"/>
    <property type="match status" value="1"/>
</dbReference>
<dbReference type="FunFam" id="3.30.230.40:FF:000001">
    <property type="entry name" value="Imidazoleglycerol-phosphate dehydratase HisB"/>
    <property type="match status" value="1"/>
</dbReference>
<dbReference type="FunFam" id="3.30.230.40:FF:000003">
    <property type="entry name" value="Imidazoleglycerol-phosphate dehydratase HisB"/>
    <property type="match status" value="1"/>
</dbReference>
<dbReference type="Gene3D" id="3.30.230.40">
    <property type="entry name" value="Imidazole glycerol phosphate dehydratase, domain 1"/>
    <property type="match status" value="2"/>
</dbReference>
<dbReference type="HAMAP" id="MF_00076">
    <property type="entry name" value="HisB"/>
    <property type="match status" value="1"/>
</dbReference>
<dbReference type="InterPro" id="IPR038494">
    <property type="entry name" value="IGPD_sf"/>
</dbReference>
<dbReference type="InterPro" id="IPR000807">
    <property type="entry name" value="ImidazoleglycerolP_deHydtase"/>
</dbReference>
<dbReference type="InterPro" id="IPR020565">
    <property type="entry name" value="ImidazoleglycerP_deHydtase_CS"/>
</dbReference>
<dbReference type="InterPro" id="IPR020568">
    <property type="entry name" value="Ribosomal_Su5_D2-typ_SF"/>
</dbReference>
<dbReference type="NCBIfam" id="NF002111">
    <property type="entry name" value="PRK00951.2-1"/>
    <property type="match status" value="1"/>
</dbReference>
<dbReference type="NCBIfam" id="NF002114">
    <property type="entry name" value="PRK00951.2-4"/>
    <property type="match status" value="1"/>
</dbReference>
<dbReference type="PANTHER" id="PTHR23133:SF2">
    <property type="entry name" value="IMIDAZOLEGLYCEROL-PHOSPHATE DEHYDRATASE"/>
    <property type="match status" value="1"/>
</dbReference>
<dbReference type="PANTHER" id="PTHR23133">
    <property type="entry name" value="IMIDAZOLEGLYCEROL-PHOSPHATE DEHYDRATASE HIS7"/>
    <property type="match status" value="1"/>
</dbReference>
<dbReference type="Pfam" id="PF00475">
    <property type="entry name" value="IGPD"/>
    <property type="match status" value="1"/>
</dbReference>
<dbReference type="SUPFAM" id="SSF54211">
    <property type="entry name" value="Ribosomal protein S5 domain 2-like"/>
    <property type="match status" value="2"/>
</dbReference>
<dbReference type="PROSITE" id="PS00954">
    <property type="entry name" value="IGP_DEHYDRATASE_1"/>
    <property type="match status" value="1"/>
</dbReference>
<dbReference type="PROSITE" id="PS00955">
    <property type="entry name" value="IGP_DEHYDRATASE_2"/>
    <property type="match status" value="1"/>
</dbReference>
<accession>Q0W0J2</accession>
<organism>
    <name type="scientific">Methanocella arvoryzae (strain DSM 22066 / NBRC 105507 / MRE50)</name>
    <dbReference type="NCBI Taxonomy" id="351160"/>
    <lineage>
        <taxon>Archaea</taxon>
        <taxon>Methanobacteriati</taxon>
        <taxon>Methanobacteriota</taxon>
        <taxon>Stenosarchaea group</taxon>
        <taxon>Methanomicrobia</taxon>
        <taxon>Methanocellales</taxon>
        <taxon>Methanocellaceae</taxon>
        <taxon>Methanocella</taxon>
    </lineage>
</organism>
<feature type="chain" id="PRO_0000336366" description="Imidazoleglycerol-phosphate dehydratase">
    <location>
        <begin position="1"/>
        <end position="192"/>
    </location>
</feature>
<gene>
    <name evidence="1" type="primary">hisB</name>
    <name type="ordered locus">UNCMA_01650</name>
    <name type="ORF">RRC390</name>
</gene>
<evidence type="ECO:0000255" key="1">
    <source>
        <dbReference type="HAMAP-Rule" id="MF_00076"/>
    </source>
</evidence>
<sequence>MRSATVHRQTRETDITVEISLDGKGNSTIDTGIGFLDHMLTSFAKHGLVDLMIKARGDLQVDDHHTVEDIGISLGEAYRDALKEKTGIERFGHALVPMDEALAVVAVDISGRGYSVFKADFRQPKIGDYSTAMTRHFIDSFARSAGITINVKIEGEDDHHMVEAMFKALGLALSMAAAKNERRGIPSTKGVL</sequence>
<name>HIS7_METAR</name>
<protein>
    <recommendedName>
        <fullName evidence="1">Imidazoleglycerol-phosphate dehydratase</fullName>
        <shortName evidence="1">IGPD</shortName>
        <ecNumber evidence="1">4.2.1.19</ecNumber>
    </recommendedName>
</protein>
<proteinExistence type="inferred from homology"/>
<comment type="catalytic activity">
    <reaction evidence="1">
        <text>D-erythro-1-(imidazol-4-yl)glycerol 3-phosphate = 3-(imidazol-4-yl)-2-oxopropyl phosphate + H2O</text>
        <dbReference type="Rhea" id="RHEA:11040"/>
        <dbReference type="ChEBI" id="CHEBI:15377"/>
        <dbReference type="ChEBI" id="CHEBI:57766"/>
        <dbReference type="ChEBI" id="CHEBI:58278"/>
        <dbReference type="EC" id="4.2.1.19"/>
    </reaction>
</comment>
<comment type="pathway">
    <text evidence="1">Amino-acid biosynthesis; L-histidine biosynthesis; L-histidine from 5-phospho-alpha-D-ribose 1-diphosphate: step 6/9.</text>
</comment>
<comment type="subcellular location">
    <subcellularLocation>
        <location evidence="1">Cytoplasm</location>
    </subcellularLocation>
</comment>
<comment type="similarity">
    <text evidence="1">Belongs to the imidazoleglycerol-phosphate dehydratase family.</text>
</comment>
<reference key="1">
    <citation type="journal article" date="2006" name="Science">
        <title>Genome of rice cluster I archaea -- the key methane producers in the rice rhizosphere.</title>
        <authorList>
            <person name="Erkel C."/>
            <person name="Kube M."/>
            <person name="Reinhardt R."/>
            <person name="Liesack W."/>
        </authorList>
    </citation>
    <scope>NUCLEOTIDE SEQUENCE [LARGE SCALE GENOMIC DNA]</scope>
    <source>
        <strain>DSM 22066 / NBRC 105507 / MRE50</strain>
    </source>
</reference>